<comment type="function">
    <text evidence="1">Plays an important role in the de novo pathway of purine nucleotide biosynthesis. Catalyzes the first committed step in the biosynthesis of AMP from IMP.</text>
</comment>
<comment type="catalytic activity">
    <reaction evidence="1">
        <text>IMP + L-aspartate + GTP = N(6)-(1,2-dicarboxyethyl)-AMP + GDP + phosphate + 2 H(+)</text>
        <dbReference type="Rhea" id="RHEA:15753"/>
        <dbReference type="ChEBI" id="CHEBI:15378"/>
        <dbReference type="ChEBI" id="CHEBI:29991"/>
        <dbReference type="ChEBI" id="CHEBI:37565"/>
        <dbReference type="ChEBI" id="CHEBI:43474"/>
        <dbReference type="ChEBI" id="CHEBI:57567"/>
        <dbReference type="ChEBI" id="CHEBI:58053"/>
        <dbReference type="ChEBI" id="CHEBI:58189"/>
        <dbReference type="EC" id="6.3.4.4"/>
    </reaction>
</comment>
<comment type="cofactor">
    <cofactor evidence="1">
        <name>Mg(2+)</name>
        <dbReference type="ChEBI" id="CHEBI:18420"/>
    </cofactor>
    <text evidence="1">Binds 1 Mg(2+) ion per subunit.</text>
</comment>
<comment type="pathway">
    <text evidence="1">Purine metabolism; AMP biosynthesis via de novo pathway; AMP from IMP: step 1/2.</text>
</comment>
<comment type="subunit">
    <text evidence="1">Homodimer.</text>
</comment>
<comment type="subcellular location">
    <subcellularLocation>
        <location evidence="1">Cytoplasm</location>
    </subcellularLocation>
</comment>
<comment type="similarity">
    <text evidence="1">Belongs to the adenylosuccinate synthetase family.</text>
</comment>
<evidence type="ECO:0000255" key="1">
    <source>
        <dbReference type="HAMAP-Rule" id="MF_00011"/>
    </source>
</evidence>
<dbReference type="EC" id="6.3.4.4" evidence="1"/>
<dbReference type="EMBL" id="AE000513">
    <property type="protein sequence ID" value="AAF09627.1"/>
    <property type="molecule type" value="Genomic_DNA"/>
</dbReference>
<dbReference type="PIR" id="C75567">
    <property type="entry name" value="C75567"/>
</dbReference>
<dbReference type="RefSeq" id="NP_293761.1">
    <property type="nucleotide sequence ID" value="NC_001263.1"/>
</dbReference>
<dbReference type="RefSeq" id="WP_010886683.1">
    <property type="nucleotide sequence ID" value="NC_001263.1"/>
</dbReference>
<dbReference type="SMR" id="Q9RYB5"/>
<dbReference type="FunCoup" id="Q9RYB5">
    <property type="interactions" value="492"/>
</dbReference>
<dbReference type="STRING" id="243230.DR_0035"/>
<dbReference type="PaxDb" id="243230-DR_0035"/>
<dbReference type="EnsemblBacteria" id="AAF09627">
    <property type="protein sequence ID" value="AAF09627"/>
    <property type="gene ID" value="DR_0035"/>
</dbReference>
<dbReference type="GeneID" id="69516264"/>
<dbReference type="KEGG" id="dra:DR_0035"/>
<dbReference type="PATRIC" id="fig|243230.17.peg.200"/>
<dbReference type="eggNOG" id="COG0104">
    <property type="taxonomic scope" value="Bacteria"/>
</dbReference>
<dbReference type="HOGENOM" id="CLU_029848_0_0_0"/>
<dbReference type="InParanoid" id="Q9RYB5"/>
<dbReference type="OrthoDB" id="9807553at2"/>
<dbReference type="UniPathway" id="UPA00075">
    <property type="reaction ID" value="UER00335"/>
</dbReference>
<dbReference type="Proteomes" id="UP000002524">
    <property type="component" value="Chromosome 1"/>
</dbReference>
<dbReference type="GO" id="GO:0005737">
    <property type="term" value="C:cytoplasm"/>
    <property type="evidence" value="ECO:0000318"/>
    <property type="project" value="GO_Central"/>
</dbReference>
<dbReference type="GO" id="GO:0004019">
    <property type="term" value="F:adenylosuccinate synthase activity"/>
    <property type="evidence" value="ECO:0000318"/>
    <property type="project" value="GO_Central"/>
</dbReference>
<dbReference type="GO" id="GO:0005525">
    <property type="term" value="F:GTP binding"/>
    <property type="evidence" value="ECO:0007669"/>
    <property type="project" value="UniProtKB-UniRule"/>
</dbReference>
<dbReference type="GO" id="GO:0000287">
    <property type="term" value="F:magnesium ion binding"/>
    <property type="evidence" value="ECO:0007669"/>
    <property type="project" value="UniProtKB-UniRule"/>
</dbReference>
<dbReference type="GO" id="GO:0044208">
    <property type="term" value="P:'de novo' AMP biosynthetic process"/>
    <property type="evidence" value="ECO:0000318"/>
    <property type="project" value="GO_Central"/>
</dbReference>
<dbReference type="GO" id="GO:0046040">
    <property type="term" value="P:IMP metabolic process"/>
    <property type="evidence" value="ECO:0000318"/>
    <property type="project" value="GO_Central"/>
</dbReference>
<dbReference type="CDD" id="cd03108">
    <property type="entry name" value="AdSS"/>
    <property type="match status" value="1"/>
</dbReference>
<dbReference type="FunFam" id="3.90.170.10:FF:000001">
    <property type="entry name" value="Adenylosuccinate synthetase"/>
    <property type="match status" value="1"/>
</dbReference>
<dbReference type="Gene3D" id="3.40.440.10">
    <property type="entry name" value="Adenylosuccinate Synthetase, subunit A, domain 1"/>
    <property type="match status" value="1"/>
</dbReference>
<dbReference type="Gene3D" id="1.10.300.10">
    <property type="entry name" value="Adenylosuccinate Synthetase, subunit A, domain 2"/>
    <property type="match status" value="1"/>
</dbReference>
<dbReference type="Gene3D" id="3.90.170.10">
    <property type="entry name" value="Adenylosuccinate Synthetase, subunit A, domain 3"/>
    <property type="match status" value="1"/>
</dbReference>
<dbReference type="HAMAP" id="MF_00011">
    <property type="entry name" value="Adenylosucc_synth"/>
    <property type="match status" value="1"/>
</dbReference>
<dbReference type="InterPro" id="IPR018220">
    <property type="entry name" value="Adenylosuccin_syn_GTP-bd"/>
</dbReference>
<dbReference type="InterPro" id="IPR042109">
    <property type="entry name" value="Adenylosuccinate_synth_dom1"/>
</dbReference>
<dbReference type="InterPro" id="IPR042110">
    <property type="entry name" value="Adenylosuccinate_synth_dom2"/>
</dbReference>
<dbReference type="InterPro" id="IPR042111">
    <property type="entry name" value="Adenylosuccinate_synth_dom3"/>
</dbReference>
<dbReference type="InterPro" id="IPR001114">
    <property type="entry name" value="Adenylosuccinate_synthetase"/>
</dbReference>
<dbReference type="InterPro" id="IPR027417">
    <property type="entry name" value="P-loop_NTPase"/>
</dbReference>
<dbReference type="NCBIfam" id="NF002223">
    <property type="entry name" value="PRK01117.1"/>
    <property type="match status" value="1"/>
</dbReference>
<dbReference type="NCBIfam" id="TIGR00184">
    <property type="entry name" value="purA"/>
    <property type="match status" value="1"/>
</dbReference>
<dbReference type="PANTHER" id="PTHR11846">
    <property type="entry name" value="ADENYLOSUCCINATE SYNTHETASE"/>
    <property type="match status" value="1"/>
</dbReference>
<dbReference type="PANTHER" id="PTHR11846:SF0">
    <property type="entry name" value="ADENYLOSUCCINATE SYNTHETASE"/>
    <property type="match status" value="1"/>
</dbReference>
<dbReference type="Pfam" id="PF00709">
    <property type="entry name" value="Adenylsucc_synt"/>
    <property type="match status" value="1"/>
</dbReference>
<dbReference type="SMART" id="SM00788">
    <property type="entry name" value="Adenylsucc_synt"/>
    <property type="match status" value="1"/>
</dbReference>
<dbReference type="SUPFAM" id="SSF52540">
    <property type="entry name" value="P-loop containing nucleoside triphosphate hydrolases"/>
    <property type="match status" value="1"/>
</dbReference>
<dbReference type="PROSITE" id="PS01266">
    <property type="entry name" value="ADENYLOSUCCIN_SYN_1"/>
    <property type="match status" value="1"/>
</dbReference>
<name>PURA_DEIRA</name>
<sequence>MPGIAIVGAQWGDEGKGKIVDFLAPEAEYVVRYQGGANAGHTVNAKGKTFKLNLLPSGVLHEGATSILGDGMVIDPEKFIEERRNLMEGGLNPRLKISDRAHIVLPHHKYVDGRKDFVGTTGKGIGPAYADRARRVGIRFGDLLDEGVLRERIERLLEAKPNSTRDAGWATVEDGLKSLAPIREQLAPFIADTGSELRQAIKDGRKVLFEGAQATLLDLNYGTYPFVTSSHPTVGGILVGTGVNHKALHRVYGVAKAFNTRVGHGPFATEVHDEAGILRLRGDGSQPWDEYGTTTGRPRRVGWLDLELLKYAVDVNGLDGLVINKMDILGGLDEIPVCTGYDEGGQPVFKKMKGWSSTDGVTSRATLPKEAQAYLDLIEDTVQCPVVIFSAGPEREKTYGEVHWG</sequence>
<reference key="1">
    <citation type="journal article" date="1999" name="Science">
        <title>Genome sequence of the radioresistant bacterium Deinococcus radiodurans R1.</title>
        <authorList>
            <person name="White O."/>
            <person name="Eisen J.A."/>
            <person name="Heidelberg J.F."/>
            <person name="Hickey E.K."/>
            <person name="Peterson J.D."/>
            <person name="Dodson R.J."/>
            <person name="Haft D.H."/>
            <person name="Gwinn M.L."/>
            <person name="Nelson W.C."/>
            <person name="Richardson D.L."/>
            <person name="Moffat K.S."/>
            <person name="Qin H."/>
            <person name="Jiang L."/>
            <person name="Pamphile W."/>
            <person name="Crosby M."/>
            <person name="Shen M."/>
            <person name="Vamathevan J.J."/>
            <person name="Lam P."/>
            <person name="McDonald L.A."/>
            <person name="Utterback T.R."/>
            <person name="Zalewski C."/>
            <person name="Makarova K.S."/>
            <person name="Aravind L."/>
            <person name="Daly M.J."/>
            <person name="Minton K.W."/>
            <person name="Fleischmann R.D."/>
            <person name="Ketchum K.A."/>
            <person name="Nelson K.E."/>
            <person name="Salzberg S.L."/>
            <person name="Smith H.O."/>
            <person name="Venter J.C."/>
            <person name="Fraser C.M."/>
        </authorList>
    </citation>
    <scope>NUCLEOTIDE SEQUENCE [LARGE SCALE GENOMIC DNA]</scope>
    <source>
        <strain>ATCC 13939 / DSM 20539 / JCM 16871 / CCUG 27074 / LMG 4051 / NBRC 15346 / NCIMB 9279 / VKM B-1422 / R1</strain>
    </source>
</reference>
<protein>
    <recommendedName>
        <fullName evidence="1">Adenylosuccinate synthetase</fullName>
        <shortName evidence="1">AMPSase</shortName>
        <shortName evidence="1">AdSS</shortName>
        <ecNumber evidence="1">6.3.4.4</ecNumber>
    </recommendedName>
    <alternativeName>
        <fullName evidence="1">IMP--aspartate ligase</fullName>
    </alternativeName>
</protein>
<accession>Q9RYB5</accession>
<gene>
    <name evidence="1" type="primary">purA</name>
    <name type="ordered locus">DR_0035</name>
</gene>
<feature type="chain" id="PRO_0000095173" description="Adenylosuccinate synthetase">
    <location>
        <begin position="1"/>
        <end position="405"/>
    </location>
</feature>
<feature type="active site" description="Proton acceptor" evidence="1">
    <location>
        <position position="13"/>
    </location>
</feature>
<feature type="active site" description="Proton donor" evidence="1">
    <location>
        <position position="41"/>
    </location>
</feature>
<feature type="binding site" evidence="1">
    <location>
        <begin position="12"/>
        <end position="18"/>
    </location>
    <ligand>
        <name>GTP</name>
        <dbReference type="ChEBI" id="CHEBI:37565"/>
    </ligand>
</feature>
<feature type="binding site" description="in other chain" evidence="1">
    <location>
        <begin position="13"/>
        <end position="16"/>
    </location>
    <ligand>
        <name>IMP</name>
        <dbReference type="ChEBI" id="CHEBI:58053"/>
        <note>ligand shared between dimeric partners</note>
    </ligand>
</feature>
<feature type="binding site" evidence="1">
    <location>
        <position position="13"/>
    </location>
    <ligand>
        <name>Mg(2+)</name>
        <dbReference type="ChEBI" id="CHEBI:18420"/>
    </ligand>
</feature>
<feature type="binding site" description="in other chain" evidence="1">
    <location>
        <begin position="38"/>
        <end position="41"/>
    </location>
    <ligand>
        <name>IMP</name>
        <dbReference type="ChEBI" id="CHEBI:58053"/>
        <note>ligand shared between dimeric partners</note>
    </ligand>
</feature>
<feature type="binding site" evidence="1">
    <location>
        <begin position="40"/>
        <end position="42"/>
    </location>
    <ligand>
        <name>GTP</name>
        <dbReference type="ChEBI" id="CHEBI:37565"/>
    </ligand>
</feature>
<feature type="binding site" evidence="1">
    <location>
        <position position="40"/>
    </location>
    <ligand>
        <name>Mg(2+)</name>
        <dbReference type="ChEBI" id="CHEBI:18420"/>
    </ligand>
</feature>
<feature type="binding site" description="in other chain" evidence="1">
    <location>
        <position position="121"/>
    </location>
    <ligand>
        <name>IMP</name>
        <dbReference type="ChEBI" id="CHEBI:58053"/>
        <note>ligand shared between dimeric partners</note>
    </ligand>
</feature>
<feature type="binding site" evidence="1">
    <location>
        <position position="135"/>
    </location>
    <ligand>
        <name>IMP</name>
        <dbReference type="ChEBI" id="CHEBI:58053"/>
        <note>ligand shared between dimeric partners</note>
    </ligand>
</feature>
<feature type="binding site" description="in other chain" evidence="1">
    <location>
        <position position="213"/>
    </location>
    <ligand>
        <name>IMP</name>
        <dbReference type="ChEBI" id="CHEBI:58053"/>
        <note>ligand shared between dimeric partners</note>
    </ligand>
</feature>
<feature type="binding site" description="in other chain" evidence="1">
    <location>
        <position position="228"/>
    </location>
    <ligand>
        <name>IMP</name>
        <dbReference type="ChEBI" id="CHEBI:58053"/>
        <note>ligand shared between dimeric partners</note>
    </ligand>
</feature>
<feature type="binding site" evidence="1">
    <location>
        <begin position="293"/>
        <end position="299"/>
    </location>
    <ligand>
        <name>substrate</name>
    </ligand>
</feature>
<feature type="binding site" description="in other chain" evidence="1">
    <location>
        <position position="297"/>
    </location>
    <ligand>
        <name>IMP</name>
        <dbReference type="ChEBI" id="CHEBI:58053"/>
        <note>ligand shared between dimeric partners</note>
    </ligand>
</feature>
<feature type="binding site" evidence="1">
    <location>
        <position position="299"/>
    </location>
    <ligand>
        <name>GTP</name>
        <dbReference type="ChEBI" id="CHEBI:37565"/>
    </ligand>
</feature>
<feature type="binding site" evidence="1">
    <location>
        <begin position="325"/>
        <end position="327"/>
    </location>
    <ligand>
        <name>GTP</name>
        <dbReference type="ChEBI" id="CHEBI:37565"/>
    </ligand>
</feature>
<feature type="binding site" evidence="1">
    <location>
        <begin position="390"/>
        <end position="392"/>
    </location>
    <ligand>
        <name>GTP</name>
        <dbReference type="ChEBI" id="CHEBI:37565"/>
    </ligand>
</feature>
<proteinExistence type="inferred from homology"/>
<organism>
    <name type="scientific">Deinococcus radiodurans (strain ATCC 13939 / DSM 20539 / JCM 16871 / CCUG 27074 / LMG 4051 / NBRC 15346 / NCIMB 9279 / VKM B-1422 / R1)</name>
    <dbReference type="NCBI Taxonomy" id="243230"/>
    <lineage>
        <taxon>Bacteria</taxon>
        <taxon>Thermotogati</taxon>
        <taxon>Deinococcota</taxon>
        <taxon>Deinococci</taxon>
        <taxon>Deinococcales</taxon>
        <taxon>Deinococcaceae</taxon>
        <taxon>Deinococcus</taxon>
    </lineage>
</organism>
<keyword id="KW-0963">Cytoplasm</keyword>
<keyword id="KW-0342">GTP-binding</keyword>
<keyword id="KW-0436">Ligase</keyword>
<keyword id="KW-0460">Magnesium</keyword>
<keyword id="KW-0479">Metal-binding</keyword>
<keyword id="KW-0547">Nucleotide-binding</keyword>
<keyword id="KW-0658">Purine biosynthesis</keyword>
<keyword id="KW-1185">Reference proteome</keyword>